<name>FOLD_SYNS9</name>
<evidence type="ECO:0000255" key="1">
    <source>
        <dbReference type="HAMAP-Rule" id="MF_01576"/>
    </source>
</evidence>
<evidence type="ECO:0000305" key="2"/>
<organism>
    <name type="scientific">Synechococcus sp. (strain CC9902)</name>
    <dbReference type="NCBI Taxonomy" id="316279"/>
    <lineage>
        <taxon>Bacteria</taxon>
        <taxon>Bacillati</taxon>
        <taxon>Cyanobacteriota</taxon>
        <taxon>Cyanophyceae</taxon>
        <taxon>Synechococcales</taxon>
        <taxon>Synechococcaceae</taxon>
        <taxon>Synechococcus</taxon>
    </lineage>
</organism>
<dbReference type="EC" id="1.5.1.5" evidence="1"/>
<dbReference type="EC" id="3.5.4.9" evidence="1"/>
<dbReference type="EMBL" id="CP000097">
    <property type="protein sequence ID" value="ABB25705.1"/>
    <property type="status" value="ALT_INIT"/>
    <property type="molecule type" value="Genomic_DNA"/>
</dbReference>
<dbReference type="RefSeq" id="WP_041425320.1">
    <property type="nucleotide sequence ID" value="NC_007513.1"/>
</dbReference>
<dbReference type="SMR" id="Q3AYX2"/>
<dbReference type="STRING" id="316279.Syncc9902_0737"/>
<dbReference type="KEGG" id="sye:Syncc9902_0737"/>
<dbReference type="eggNOG" id="COG0190">
    <property type="taxonomic scope" value="Bacteria"/>
</dbReference>
<dbReference type="HOGENOM" id="CLU_034045_2_1_3"/>
<dbReference type="OrthoDB" id="9803580at2"/>
<dbReference type="UniPathway" id="UPA00193"/>
<dbReference type="Proteomes" id="UP000002712">
    <property type="component" value="Chromosome"/>
</dbReference>
<dbReference type="GO" id="GO:0005829">
    <property type="term" value="C:cytosol"/>
    <property type="evidence" value="ECO:0007669"/>
    <property type="project" value="TreeGrafter"/>
</dbReference>
<dbReference type="GO" id="GO:0004477">
    <property type="term" value="F:methenyltetrahydrofolate cyclohydrolase activity"/>
    <property type="evidence" value="ECO:0007669"/>
    <property type="project" value="UniProtKB-UniRule"/>
</dbReference>
<dbReference type="GO" id="GO:0004488">
    <property type="term" value="F:methylenetetrahydrofolate dehydrogenase (NADP+) activity"/>
    <property type="evidence" value="ECO:0007669"/>
    <property type="project" value="UniProtKB-UniRule"/>
</dbReference>
<dbReference type="GO" id="GO:0000105">
    <property type="term" value="P:L-histidine biosynthetic process"/>
    <property type="evidence" value="ECO:0007669"/>
    <property type="project" value="UniProtKB-KW"/>
</dbReference>
<dbReference type="GO" id="GO:0009086">
    <property type="term" value="P:methionine biosynthetic process"/>
    <property type="evidence" value="ECO:0007669"/>
    <property type="project" value="UniProtKB-KW"/>
</dbReference>
<dbReference type="GO" id="GO:0006164">
    <property type="term" value="P:purine nucleotide biosynthetic process"/>
    <property type="evidence" value="ECO:0007669"/>
    <property type="project" value="UniProtKB-KW"/>
</dbReference>
<dbReference type="GO" id="GO:0035999">
    <property type="term" value="P:tetrahydrofolate interconversion"/>
    <property type="evidence" value="ECO:0007669"/>
    <property type="project" value="UniProtKB-UniRule"/>
</dbReference>
<dbReference type="CDD" id="cd01080">
    <property type="entry name" value="NAD_bind_m-THF_DH_Cyclohyd"/>
    <property type="match status" value="1"/>
</dbReference>
<dbReference type="FunFam" id="3.40.50.720:FF:000006">
    <property type="entry name" value="Bifunctional protein FolD"/>
    <property type="match status" value="1"/>
</dbReference>
<dbReference type="FunFam" id="3.40.50.10860:FF:000005">
    <property type="entry name" value="C-1-tetrahydrofolate synthase, cytoplasmic, putative"/>
    <property type="match status" value="1"/>
</dbReference>
<dbReference type="Gene3D" id="3.40.50.10860">
    <property type="entry name" value="Leucine Dehydrogenase, chain A, domain 1"/>
    <property type="match status" value="1"/>
</dbReference>
<dbReference type="Gene3D" id="3.40.50.720">
    <property type="entry name" value="NAD(P)-binding Rossmann-like Domain"/>
    <property type="match status" value="1"/>
</dbReference>
<dbReference type="HAMAP" id="MF_01576">
    <property type="entry name" value="THF_DHG_CYH"/>
    <property type="match status" value="1"/>
</dbReference>
<dbReference type="InterPro" id="IPR046346">
    <property type="entry name" value="Aminoacid_DH-like_N_sf"/>
</dbReference>
<dbReference type="InterPro" id="IPR036291">
    <property type="entry name" value="NAD(P)-bd_dom_sf"/>
</dbReference>
<dbReference type="InterPro" id="IPR000672">
    <property type="entry name" value="THF_DH/CycHdrlase"/>
</dbReference>
<dbReference type="InterPro" id="IPR020630">
    <property type="entry name" value="THF_DH/CycHdrlase_cat_dom"/>
</dbReference>
<dbReference type="InterPro" id="IPR020867">
    <property type="entry name" value="THF_DH/CycHdrlase_CS"/>
</dbReference>
<dbReference type="InterPro" id="IPR020631">
    <property type="entry name" value="THF_DH/CycHdrlase_NAD-bd_dom"/>
</dbReference>
<dbReference type="NCBIfam" id="NF010783">
    <property type="entry name" value="PRK14186.1"/>
    <property type="match status" value="1"/>
</dbReference>
<dbReference type="PANTHER" id="PTHR48099:SF5">
    <property type="entry name" value="C-1-TETRAHYDROFOLATE SYNTHASE, CYTOPLASMIC"/>
    <property type="match status" value="1"/>
</dbReference>
<dbReference type="PANTHER" id="PTHR48099">
    <property type="entry name" value="C-1-TETRAHYDROFOLATE SYNTHASE, CYTOPLASMIC-RELATED"/>
    <property type="match status" value="1"/>
</dbReference>
<dbReference type="Pfam" id="PF00763">
    <property type="entry name" value="THF_DHG_CYH"/>
    <property type="match status" value="1"/>
</dbReference>
<dbReference type="Pfam" id="PF02882">
    <property type="entry name" value="THF_DHG_CYH_C"/>
    <property type="match status" value="1"/>
</dbReference>
<dbReference type="PRINTS" id="PR00085">
    <property type="entry name" value="THFDHDRGNASE"/>
</dbReference>
<dbReference type="SUPFAM" id="SSF53223">
    <property type="entry name" value="Aminoacid dehydrogenase-like, N-terminal domain"/>
    <property type="match status" value="1"/>
</dbReference>
<dbReference type="SUPFAM" id="SSF51735">
    <property type="entry name" value="NAD(P)-binding Rossmann-fold domains"/>
    <property type="match status" value="1"/>
</dbReference>
<dbReference type="PROSITE" id="PS00767">
    <property type="entry name" value="THF_DHG_CYH_2"/>
    <property type="match status" value="1"/>
</dbReference>
<proteinExistence type="inferred from homology"/>
<accession>Q3AYX2</accession>
<keyword id="KW-0028">Amino-acid biosynthesis</keyword>
<keyword id="KW-0368">Histidine biosynthesis</keyword>
<keyword id="KW-0378">Hydrolase</keyword>
<keyword id="KW-0486">Methionine biosynthesis</keyword>
<keyword id="KW-0511">Multifunctional enzyme</keyword>
<keyword id="KW-0521">NADP</keyword>
<keyword id="KW-0554">One-carbon metabolism</keyword>
<keyword id="KW-0560">Oxidoreductase</keyword>
<keyword id="KW-0658">Purine biosynthesis</keyword>
<keyword id="KW-1185">Reference proteome</keyword>
<protein>
    <recommendedName>
        <fullName evidence="1">Bifunctional protein FolD</fullName>
    </recommendedName>
    <domain>
        <recommendedName>
            <fullName evidence="1">Methylenetetrahydrofolate dehydrogenase</fullName>
            <ecNumber evidence="1">1.5.1.5</ecNumber>
        </recommendedName>
    </domain>
    <domain>
        <recommendedName>
            <fullName evidence="1">Methenyltetrahydrofolate cyclohydrolase</fullName>
            <ecNumber evidence="1">3.5.4.9</ecNumber>
        </recommendedName>
    </domain>
</protein>
<feature type="chain" id="PRO_0000268533" description="Bifunctional protein FolD">
    <location>
        <begin position="1"/>
        <end position="293"/>
    </location>
</feature>
<feature type="binding site" evidence="1">
    <location>
        <begin position="165"/>
        <end position="167"/>
    </location>
    <ligand>
        <name>NADP(+)</name>
        <dbReference type="ChEBI" id="CHEBI:58349"/>
    </ligand>
</feature>
<feature type="binding site" evidence="1">
    <location>
        <position position="190"/>
    </location>
    <ligand>
        <name>NADP(+)</name>
        <dbReference type="ChEBI" id="CHEBI:58349"/>
    </ligand>
</feature>
<feature type="binding site" evidence="1">
    <location>
        <position position="231"/>
    </location>
    <ligand>
        <name>NADP(+)</name>
        <dbReference type="ChEBI" id="CHEBI:58349"/>
    </ligand>
</feature>
<gene>
    <name evidence="1" type="primary">folD</name>
    <name type="ordered locus">Syncc9902_0737</name>
</gene>
<comment type="function">
    <text evidence="1">Catalyzes the oxidation of 5,10-methylenetetrahydrofolate to 5,10-methenyltetrahydrofolate and then the hydrolysis of 5,10-methenyltetrahydrofolate to 10-formyltetrahydrofolate.</text>
</comment>
<comment type="catalytic activity">
    <reaction evidence="1">
        <text>(6R)-5,10-methylene-5,6,7,8-tetrahydrofolate + NADP(+) = (6R)-5,10-methenyltetrahydrofolate + NADPH</text>
        <dbReference type="Rhea" id="RHEA:22812"/>
        <dbReference type="ChEBI" id="CHEBI:15636"/>
        <dbReference type="ChEBI" id="CHEBI:57455"/>
        <dbReference type="ChEBI" id="CHEBI:57783"/>
        <dbReference type="ChEBI" id="CHEBI:58349"/>
        <dbReference type="EC" id="1.5.1.5"/>
    </reaction>
</comment>
<comment type="catalytic activity">
    <reaction evidence="1">
        <text>(6R)-5,10-methenyltetrahydrofolate + H2O = (6R)-10-formyltetrahydrofolate + H(+)</text>
        <dbReference type="Rhea" id="RHEA:23700"/>
        <dbReference type="ChEBI" id="CHEBI:15377"/>
        <dbReference type="ChEBI" id="CHEBI:15378"/>
        <dbReference type="ChEBI" id="CHEBI:57455"/>
        <dbReference type="ChEBI" id="CHEBI:195366"/>
        <dbReference type="EC" id="3.5.4.9"/>
    </reaction>
</comment>
<comment type="pathway">
    <text evidence="1">One-carbon metabolism; tetrahydrofolate interconversion.</text>
</comment>
<comment type="subunit">
    <text evidence="1">Homodimer.</text>
</comment>
<comment type="similarity">
    <text evidence="1">Belongs to the tetrahydrofolate dehydrogenase/cyclohydrolase family.</text>
</comment>
<comment type="sequence caution" evidence="2">
    <conflict type="erroneous initiation">
        <sequence resource="EMBL-CDS" id="ABB25705"/>
    </conflict>
</comment>
<reference key="1">
    <citation type="submission" date="2005-08" db="EMBL/GenBank/DDBJ databases">
        <title>Complete sequence of Synechococcus sp. CC9902.</title>
        <authorList>
            <person name="Copeland A."/>
            <person name="Lucas S."/>
            <person name="Lapidus A."/>
            <person name="Barry K."/>
            <person name="Detter J.C."/>
            <person name="Glavina T."/>
            <person name="Hammon N."/>
            <person name="Israni S."/>
            <person name="Pitluck S."/>
            <person name="Martinez M."/>
            <person name="Schmutz J."/>
            <person name="Larimer F."/>
            <person name="Land M."/>
            <person name="Kyrpides N."/>
            <person name="Ivanova N."/>
            <person name="Richardson P."/>
        </authorList>
    </citation>
    <scope>NUCLEOTIDE SEQUENCE [LARGE SCALE GENOMIC DNA]</scope>
    <source>
        <strain>CC9902</strain>
    </source>
</reference>
<sequence length="293" mass="30375">MALRLDGKALAKAVESRLQAQIESNLPQAGRPPGLAVLRVGDDPASAVYVANKEKACARIGVASYGAHLPSSTPFAEVLSTIQQLNADPRVDGILLQLPLPEGLDEGPLLMAIDPEKDADGLHTLNLGRLLKGEQGPRSCTPAGVMAMLRSQGIDPAGQRAVVIGRSILVGQPMALMLQAANATVTVVHSRTKDLVAHTREADIVVVAAGRPGMVGAEHIKPGAAVVDVGIHRKPEGGLCGDVRAAEVEPIAAALSPVPGGVGPMTVTMLLVNTVVAWCRRHGVDHDLADLLS</sequence>